<protein>
    <recommendedName>
        <fullName evidence="1">Adenylate kinase</fullName>
        <shortName evidence="1">AK</shortName>
        <ecNumber evidence="1">2.7.4.3</ecNumber>
    </recommendedName>
    <alternativeName>
        <fullName evidence="1">ATP-AMP transphosphorylase</fullName>
    </alternativeName>
    <alternativeName>
        <fullName evidence="1">ATP:AMP phosphotransferase</fullName>
    </alternativeName>
    <alternativeName>
        <fullName evidence="1">Adenylate monophosphate kinase</fullName>
    </alternativeName>
</protein>
<feature type="chain" id="PRO_1000021714" description="Adenylate kinase">
    <location>
        <begin position="1"/>
        <end position="213"/>
    </location>
</feature>
<feature type="region of interest" description="NMP" evidence="1">
    <location>
        <begin position="34"/>
        <end position="63"/>
    </location>
</feature>
<feature type="region of interest" description="LID" evidence="1">
    <location>
        <begin position="129"/>
        <end position="162"/>
    </location>
</feature>
<feature type="binding site" evidence="1">
    <location>
        <begin position="14"/>
        <end position="19"/>
    </location>
    <ligand>
        <name>ATP</name>
        <dbReference type="ChEBI" id="CHEBI:30616"/>
    </ligand>
</feature>
<feature type="binding site" evidence="1">
    <location>
        <position position="35"/>
    </location>
    <ligand>
        <name>AMP</name>
        <dbReference type="ChEBI" id="CHEBI:456215"/>
    </ligand>
</feature>
<feature type="binding site" evidence="1">
    <location>
        <position position="40"/>
    </location>
    <ligand>
        <name>AMP</name>
        <dbReference type="ChEBI" id="CHEBI:456215"/>
    </ligand>
</feature>
<feature type="binding site" evidence="1">
    <location>
        <begin position="61"/>
        <end position="63"/>
    </location>
    <ligand>
        <name>AMP</name>
        <dbReference type="ChEBI" id="CHEBI:456215"/>
    </ligand>
</feature>
<feature type="binding site" evidence="1">
    <location>
        <begin position="89"/>
        <end position="92"/>
    </location>
    <ligand>
        <name>AMP</name>
        <dbReference type="ChEBI" id="CHEBI:456215"/>
    </ligand>
</feature>
<feature type="binding site" evidence="1">
    <location>
        <position position="96"/>
    </location>
    <ligand>
        <name>AMP</name>
        <dbReference type="ChEBI" id="CHEBI:456215"/>
    </ligand>
</feature>
<feature type="binding site" evidence="1">
    <location>
        <position position="130"/>
    </location>
    <ligand>
        <name>ATP</name>
        <dbReference type="ChEBI" id="CHEBI:30616"/>
    </ligand>
</feature>
<feature type="binding site" evidence="1">
    <location>
        <position position="133"/>
    </location>
    <ligand>
        <name>Zn(2+)</name>
        <dbReference type="ChEBI" id="CHEBI:29105"/>
        <note>structural</note>
    </ligand>
</feature>
<feature type="binding site" evidence="1">
    <location>
        <position position="136"/>
    </location>
    <ligand>
        <name>Zn(2+)</name>
        <dbReference type="ChEBI" id="CHEBI:29105"/>
        <note>structural</note>
    </ligand>
</feature>
<feature type="binding site" evidence="1">
    <location>
        <begin position="139"/>
        <end position="140"/>
    </location>
    <ligand>
        <name>ATP</name>
        <dbReference type="ChEBI" id="CHEBI:30616"/>
    </ligand>
</feature>
<feature type="binding site" evidence="1">
    <location>
        <position position="149"/>
    </location>
    <ligand>
        <name>Zn(2+)</name>
        <dbReference type="ChEBI" id="CHEBI:29105"/>
        <note>structural</note>
    </ligand>
</feature>
<feature type="binding site" evidence="1">
    <location>
        <position position="152"/>
    </location>
    <ligand>
        <name>Zn(2+)</name>
        <dbReference type="ChEBI" id="CHEBI:29105"/>
        <note>structural</note>
    </ligand>
</feature>
<feature type="binding site" evidence="1">
    <location>
        <position position="159"/>
    </location>
    <ligand>
        <name>AMP</name>
        <dbReference type="ChEBI" id="CHEBI:456215"/>
    </ligand>
</feature>
<feature type="binding site" evidence="1">
    <location>
        <position position="170"/>
    </location>
    <ligand>
        <name>AMP</name>
        <dbReference type="ChEBI" id="CHEBI:456215"/>
    </ligand>
</feature>
<feature type="binding site" evidence="1">
    <location>
        <position position="198"/>
    </location>
    <ligand>
        <name>ATP</name>
        <dbReference type="ChEBI" id="CHEBI:30616"/>
    </ligand>
</feature>
<comment type="function">
    <text evidence="1">Catalyzes the reversible transfer of the terminal phosphate group between ATP and AMP. Plays an important role in cellular energy homeostasis and in adenine nucleotide metabolism.</text>
</comment>
<comment type="catalytic activity">
    <reaction evidence="1">
        <text>AMP + ATP = 2 ADP</text>
        <dbReference type="Rhea" id="RHEA:12973"/>
        <dbReference type="ChEBI" id="CHEBI:30616"/>
        <dbReference type="ChEBI" id="CHEBI:456215"/>
        <dbReference type="ChEBI" id="CHEBI:456216"/>
        <dbReference type="EC" id="2.7.4.3"/>
    </reaction>
</comment>
<comment type="pathway">
    <text evidence="1">Purine metabolism; AMP biosynthesis via salvage pathway; AMP from ADP: step 1/1.</text>
</comment>
<comment type="subunit">
    <text evidence="1">Monomer.</text>
</comment>
<comment type="subcellular location">
    <subcellularLocation>
        <location evidence="1">Cytoplasm</location>
    </subcellularLocation>
</comment>
<comment type="domain">
    <text evidence="1">Consists of three domains, a large central CORE domain and two small peripheral domains, NMPbind and LID, which undergo movements during catalysis. The LID domain closes over the site of phosphoryl transfer upon ATP binding. Assembling and dissambling the active center during each catalytic cycle provides an effective means to prevent ATP hydrolysis. Some bacteria have evolved a zinc-coordinating structure that stabilizes the LID domain.</text>
</comment>
<comment type="similarity">
    <text evidence="1">Belongs to the adenylate kinase family.</text>
</comment>
<name>KAD_CHLAB</name>
<evidence type="ECO:0000255" key="1">
    <source>
        <dbReference type="HAMAP-Rule" id="MF_00235"/>
    </source>
</evidence>
<proteinExistence type="inferred from homology"/>
<sequence length="213" mass="23995">MLNKIFYIIMGPPGSGKGTQSQRLAHQLKLPHMSSGELFRSAIDSASPLGIKAAEYINQGLLVPDAIVWGMVQEALNQPECQSGCIIDGFPRTLDQAILLNDFFMQSYADYRVIQLDVSNEEIIRRIHSRFICPSCKHVYNQNQGLSECPTCQMKLVRRSDDTLEVIHKRLESYEKLTAPLIDYYQELGKLTRIPSEASPDDVFQSIEACIKA</sequence>
<reference key="1">
    <citation type="journal article" date="2005" name="Genome Res.">
        <title>The Chlamydophila abortus genome sequence reveals an array of variable proteins that contribute to interspecies variation.</title>
        <authorList>
            <person name="Thomson N.R."/>
            <person name="Yeats C."/>
            <person name="Bell K."/>
            <person name="Holden M.T.G."/>
            <person name="Bentley S.D."/>
            <person name="Livingstone M."/>
            <person name="Cerdeno-Tarraga A.-M."/>
            <person name="Harris B."/>
            <person name="Doggett J."/>
            <person name="Ormond D."/>
            <person name="Mungall K."/>
            <person name="Clarke K."/>
            <person name="Feltwell T."/>
            <person name="Hance Z."/>
            <person name="Sanders M."/>
            <person name="Quail M.A."/>
            <person name="Price C."/>
            <person name="Barrell B.G."/>
            <person name="Parkhill J."/>
            <person name="Longbottom D."/>
        </authorList>
    </citation>
    <scope>NUCLEOTIDE SEQUENCE [LARGE SCALE GENOMIC DNA]</scope>
    <source>
        <strain>DSM 27085 / S26/3</strain>
    </source>
</reference>
<keyword id="KW-0067">ATP-binding</keyword>
<keyword id="KW-0963">Cytoplasm</keyword>
<keyword id="KW-0418">Kinase</keyword>
<keyword id="KW-0479">Metal-binding</keyword>
<keyword id="KW-0545">Nucleotide biosynthesis</keyword>
<keyword id="KW-0547">Nucleotide-binding</keyword>
<keyword id="KW-0808">Transferase</keyword>
<keyword id="KW-0862">Zinc</keyword>
<gene>
    <name evidence="1" type="primary">adk</name>
    <name type="ordered locus">CAB521</name>
</gene>
<dbReference type="EC" id="2.7.4.3" evidence="1"/>
<dbReference type="EMBL" id="CR848038">
    <property type="protein sequence ID" value="CAH63972.1"/>
    <property type="molecule type" value="Genomic_DNA"/>
</dbReference>
<dbReference type="RefSeq" id="WP_011097137.1">
    <property type="nucleotide sequence ID" value="NC_004552.2"/>
</dbReference>
<dbReference type="SMR" id="Q5L5W0"/>
<dbReference type="KEGG" id="cab:CAB521"/>
<dbReference type="eggNOG" id="COG0563">
    <property type="taxonomic scope" value="Bacteria"/>
</dbReference>
<dbReference type="HOGENOM" id="CLU_032354_1_2_0"/>
<dbReference type="OrthoDB" id="9805030at2"/>
<dbReference type="UniPathway" id="UPA00588">
    <property type="reaction ID" value="UER00649"/>
</dbReference>
<dbReference type="Proteomes" id="UP000001012">
    <property type="component" value="Chromosome"/>
</dbReference>
<dbReference type="GO" id="GO:0005737">
    <property type="term" value="C:cytoplasm"/>
    <property type="evidence" value="ECO:0007669"/>
    <property type="project" value="UniProtKB-SubCell"/>
</dbReference>
<dbReference type="GO" id="GO:0004017">
    <property type="term" value="F:adenylate kinase activity"/>
    <property type="evidence" value="ECO:0007669"/>
    <property type="project" value="UniProtKB-UniRule"/>
</dbReference>
<dbReference type="GO" id="GO:0005524">
    <property type="term" value="F:ATP binding"/>
    <property type="evidence" value="ECO:0007669"/>
    <property type="project" value="UniProtKB-UniRule"/>
</dbReference>
<dbReference type="GO" id="GO:0046872">
    <property type="term" value="F:metal ion binding"/>
    <property type="evidence" value="ECO:0007669"/>
    <property type="project" value="UniProtKB-KW"/>
</dbReference>
<dbReference type="GO" id="GO:0044209">
    <property type="term" value="P:AMP salvage"/>
    <property type="evidence" value="ECO:0007669"/>
    <property type="project" value="UniProtKB-UniRule"/>
</dbReference>
<dbReference type="CDD" id="cd01428">
    <property type="entry name" value="ADK"/>
    <property type="match status" value="1"/>
</dbReference>
<dbReference type="Gene3D" id="3.40.50.300">
    <property type="entry name" value="P-loop containing nucleotide triphosphate hydrolases"/>
    <property type="match status" value="1"/>
</dbReference>
<dbReference type="HAMAP" id="MF_00235">
    <property type="entry name" value="Adenylate_kinase_Adk"/>
    <property type="match status" value="1"/>
</dbReference>
<dbReference type="InterPro" id="IPR006259">
    <property type="entry name" value="Adenyl_kin_sub"/>
</dbReference>
<dbReference type="InterPro" id="IPR000850">
    <property type="entry name" value="Adenylat/UMP-CMP_kin"/>
</dbReference>
<dbReference type="InterPro" id="IPR033690">
    <property type="entry name" value="Adenylat_kinase_CS"/>
</dbReference>
<dbReference type="InterPro" id="IPR027417">
    <property type="entry name" value="P-loop_NTPase"/>
</dbReference>
<dbReference type="NCBIfam" id="TIGR01351">
    <property type="entry name" value="adk"/>
    <property type="match status" value="1"/>
</dbReference>
<dbReference type="NCBIfam" id="NF001381">
    <property type="entry name" value="PRK00279.1-3"/>
    <property type="match status" value="1"/>
</dbReference>
<dbReference type="NCBIfam" id="NF001385">
    <property type="entry name" value="PRK00279.2-3"/>
    <property type="match status" value="1"/>
</dbReference>
<dbReference type="PANTHER" id="PTHR23359">
    <property type="entry name" value="NUCLEOTIDE KINASE"/>
    <property type="match status" value="1"/>
</dbReference>
<dbReference type="Pfam" id="PF00406">
    <property type="entry name" value="ADK"/>
    <property type="match status" value="1"/>
</dbReference>
<dbReference type="PRINTS" id="PR00094">
    <property type="entry name" value="ADENYLTKNASE"/>
</dbReference>
<dbReference type="SUPFAM" id="SSF52540">
    <property type="entry name" value="P-loop containing nucleoside triphosphate hydrolases"/>
    <property type="match status" value="1"/>
</dbReference>
<dbReference type="SUPFAM" id="SSF57802">
    <property type="entry name" value="Rubredoxin-like"/>
    <property type="match status" value="1"/>
</dbReference>
<dbReference type="PROSITE" id="PS00113">
    <property type="entry name" value="ADENYLATE_KINASE"/>
    <property type="match status" value="1"/>
</dbReference>
<organism>
    <name type="scientific">Chlamydia abortus (strain DSM 27085 / S26/3)</name>
    <name type="common">Chlamydophila abortus</name>
    <dbReference type="NCBI Taxonomy" id="218497"/>
    <lineage>
        <taxon>Bacteria</taxon>
        <taxon>Pseudomonadati</taxon>
        <taxon>Chlamydiota</taxon>
        <taxon>Chlamydiia</taxon>
        <taxon>Chlamydiales</taxon>
        <taxon>Chlamydiaceae</taxon>
        <taxon>Chlamydia/Chlamydophila group</taxon>
        <taxon>Chlamydia</taxon>
    </lineage>
</organism>
<accession>Q5L5W0</accession>